<dbReference type="EC" id="2.4.2.1" evidence="2"/>
<dbReference type="EMBL" id="CP001215">
    <property type="protein sequence ID" value="ACP12700.1"/>
    <property type="molecule type" value="Genomic_DNA"/>
</dbReference>
<dbReference type="RefSeq" id="WP_000110707.1">
    <property type="nucleotide sequence ID" value="NC_012581.1"/>
</dbReference>
<dbReference type="SMR" id="C3L9J6"/>
<dbReference type="GeneID" id="93009578"/>
<dbReference type="KEGG" id="bah:BAMEG_3111"/>
<dbReference type="HOGENOM" id="CLU_068457_2_0_9"/>
<dbReference type="GO" id="GO:0005829">
    <property type="term" value="C:cytosol"/>
    <property type="evidence" value="ECO:0007669"/>
    <property type="project" value="TreeGrafter"/>
</dbReference>
<dbReference type="GO" id="GO:0004731">
    <property type="term" value="F:purine-nucleoside phosphorylase activity"/>
    <property type="evidence" value="ECO:0007669"/>
    <property type="project" value="UniProtKB-UniRule"/>
</dbReference>
<dbReference type="GO" id="GO:0006152">
    <property type="term" value="P:purine nucleoside catabolic process"/>
    <property type="evidence" value="ECO:0007669"/>
    <property type="project" value="TreeGrafter"/>
</dbReference>
<dbReference type="CDD" id="cd09006">
    <property type="entry name" value="PNP_EcPNPI-like"/>
    <property type="match status" value="1"/>
</dbReference>
<dbReference type="Gene3D" id="3.40.50.1580">
    <property type="entry name" value="Nucleoside phosphorylase domain"/>
    <property type="match status" value="1"/>
</dbReference>
<dbReference type="HAMAP" id="MF_01627">
    <property type="entry name" value="Pur_nucleosid_phosp"/>
    <property type="match status" value="1"/>
</dbReference>
<dbReference type="InterPro" id="IPR004402">
    <property type="entry name" value="DeoD-type"/>
</dbReference>
<dbReference type="InterPro" id="IPR018016">
    <property type="entry name" value="Nucleoside_phosphorylase_CS"/>
</dbReference>
<dbReference type="InterPro" id="IPR000845">
    <property type="entry name" value="Nucleoside_phosphorylase_d"/>
</dbReference>
<dbReference type="InterPro" id="IPR035994">
    <property type="entry name" value="Nucleoside_phosphorylase_sf"/>
</dbReference>
<dbReference type="NCBIfam" id="TIGR00107">
    <property type="entry name" value="deoD"/>
    <property type="match status" value="1"/>
</dbReference>
<dbReference type="NCBIfam" id="NF004489">
    <property type="entry name" value="PRK05819.1"/>
    <property type="match status" value="1"/>
</dbReference>
<dbReference type="NCBIfam" id="NF009914">
    <property type="entry name" value="PRK13374.1"/>
    <property type="match status" value="1"/>
</dbReference>
<dbReference type="PANTHER" id="PTHR43691:SF11">
    <property type="entry name" value="FI09636P-RELATED"/>
    <property type="match status" value="1"/>
</dbReference>
<dbReference type="PANTHER" id="PTHR43691">
    <property type="entry name" value="URIDINE PHOSPHORYLASE"/>
    <property type="match status" value="1"/>
</dbReference>
<dbReference type="Pfam" id="PF01048">
    <property type="entry name" value="PNP_UDP_1"/>
    <property type="match status" value="1"/>
</dbReference>
<dbReference type="SUPFAM" id="SSF53167">
    <property type="entry name" value="Purine and uridine phosphorylases"/>
    <property type="match status" value="1"/>
</dbReference>
<dbReference type="PROSITE" id="PS01232">
    <property type="entry name" value="PNP_UDP_1"/>
    <property type="match status" value="1"/>
</dbReference>
<gene>
    <name evidence="2" type="primary">deoD</name>
    <name type="ordered locus">BAMEG_3111</name>
</gene>
<accession>C3L9J6</accession>
<organism>
    <name type="scientific">Bacillus anthracis (strain CDC 684 / NRRL 3495)</name>
    <dbReference type="NCBI Taxonomy" id="568206"/>
    <lineage>
        <taxon>Bacteria</taxon>
        <taxon>Bacillati</taxon>
        <taxon>Bacillota</taxon>
        <taxon>Bacilli</taxon>
        <taxon>Bacillales</taxon>
        <taxon>Bacillaceae</taxon>
        <taxon>Bacillus</taxon>
        <taxon>Bacillus cereus group</taxon>
    </lineage>
</organism>
<proteinExistence type="inferred from homology"/>
<reference key="1">
    <citation type="submission" date="2008-10" db="EMBL/GenBank/DDBJ databases">
        <title>Genome sequence of Bacillus anthracis str. CDC 684.</title>
        <authorList>
            <person name="Dodson R.J."/>
            <person name="Munk A.C."/>
            <person name="Brettin T."/>
            <person name="Bruce D."/>
            <person name="Detter C."/>
            <person name="Tapia R."/>
            <person name="Han C."/>
            <person name="Sutton G."/>
            <person name="Sims D."/>
        </authorList>
    </citation>
    <scope>NUCLEOTIDE SEQUENCE [LARGE SCALE GENOMIC DNA]</scope>
    <source>
        <strain>CDC 684 / NRRL 3495</strain>
    </source>
</reference>
<keyword id="KW-0328">Glycosyltransferase</keyword>
<keyword id="KW-0808">Transferase</keyword>
<sequence length="235" mass="25675">MSVHIEAKQGEIAESILLPGDPLRAKYIAETFLEDVTCYNNVRGMLGFTGTYKGKRVSVQGTGMGVPSISIYVNELIQSYGVKNLIRVGTCGAIQKDVKVRDVIIAMTACTDSNMNRLTFPGFDFAPAANFDLLKKAYDAGTEKGLHVRVGNVLTADVFYRESMDMVKKLGDYGVLAVEMETTALYTLAAKYGVNALSVLTVSDHIFTGEETTSEERQTTFNEMIEIALDAAIQQ</sequence>
<comment type="function">
    <text evidence="2">Catalyzes the reversible phosphorolytic breakdown of the N-glycosidic bond in the beta-(deoxy)ribonucleoside molecules, with the formation of the corresponding free purine bases and pentose-1-phosphate.</text>
</comment>
<comment type="catalytic activity">
    <reaction evidence="2">
        <text>a purine D-ribonucleoside + phosphate = a purine nucleobase + alpha-D-ribose 1-phosphate</text>
        <dbReference type="Rhea" id="RHEA:19805"/>
        <dbReference type="ChEBI" id="CHEBI:26386"/>
        <dbReference type="ChEBI" id="CHEBI:43474"/>
        <dbReference type="ChEBI" id="CHEBI:57720"/>
        <dbReference type="ChEBI" id="CHEBI:142355"/>
        <dbReference type="EC" id="2.4.2.1"/>
    </reaction>
</comment>
<comment type="catalytic activity">
    <reaction evidence="2">
        <text>a purine 2'-deoxy-D-ribonucleoside + phosphate = a purine nucleobase + 2-deoxy-alpha-D-ribose 1-phosphate</text>
        <dbReference type="Rhea" id="RHEA:36431"/>
        <dbReference type="ChEBI" id="CHEBI:26386"/>
        <dbReference type="ChEBI" id="CHEBI:43474"/>
        <dbReference type="ChEBI" id="CHEBI:57259"/>
        <dbReference type="ChEBI" id="CHEBI:142361"/>
        <dbReference type="EC" id="2.4.2.1"/>
    </reaction>
</comment>
<comment type="subunit">
    <text evidence="2">Homohexamer; trimer of homodimers.</text>
</comment>
<comment type="similarity">
    <text evidence="2">Belongs to the PNP/UDP phosphorylase family.</text>
</comment>
<evidence type="ECO:0000250" key="1">
    <source>
        <dbReference type="UniProtKB" id="P50389"/>
    </source>
</evidence>
<evidence type="ECO:0000255" key="2">
    <source>
        <dbReference type="HAMAP-Rule" id="MF_01627"/>
    </source>
</evidence>
<feature type="chain" id="PRO_1000186172" description="Purine nucleoside phosphorylase DeoD-type">
    <location>
        <begin position="1"/>
        <end position="235"/>
    </location>
</feature>
<feature type="active site" description="Proton donor" evidence="2">
    <location>
        <position position="204"/>
    </location>
</feature>
<feature type="binding site" evidence="1">
    <location>
        <position position="4"/>
    </location>
    <ligand>
        <name>a purine D-ribonucleoside</name>
        <dbReference type="ChEBI" id="CHEBI:142355"/>
        <note>ligand shared between dimeric partners</note>
    </ligand>
</feature>
<feature type="binding site" description="in other chain" evidence="1">
    <location>
        <position position="20"/>
    </location>
    <ligand>
        <name>phosphate</name>
        <dbReference type="ChEBI" id="CHEBI:43474"/>
        <note>ligand shared between dimeric partners</note>
    </ligand>
</feature>
<feature type="binding site" description="in other chain" evidence="1">
    <location>
        <position position="24"/>
    </location>
    <ligand>
        <name>phosphate</name>
        <dbReference type="ChEBI" id="CHEBI:43474"/>
        <note>ligand shared between dimeric partners</note>
    </ligand>
</feature>
<feature type="binding site" evidence="1">
    <location>
        <position position="43"/>
    </location>
    <ligand>
        <name>phosphate</name>
        <dbReference type="ChEBI" id="CHEBI:43474"/>
        <note>ligand shared between dimeric partners</note>
    </ligand>
</feature>
<feature type="binding site" description="in other chain" evidence="1">
    <location>
        <begin position="87"/>
        <end position="90"/>
    </location>
    <ligand>
        <name>phosphate</name>
        <dbReference type="ChEBI" id="CHEBI:43474"/>
        <note>ligand shared between dimeric partners</note>
    </ligand>
</feature>
<feature type="binding site" description="in other chain" evidence="1">
    <location>
        <position position="162"/>
    </location>
    <ligand>
        <name>a purine D-ribonucleoside</name>
        <dbReference type="ChEBI" id="CHEBI:142355"/>
        <note>ligand shared between dimeric partners</note>
    </ligand>
</feature>
<feature type="binding site" description="in other chain" evidence="1">
    <location>
        <begin position="179"/>
        <end position="181"/>
    </location>
    <ligand>
        <name>a purine D-ribonucleoside</name>
        <dbReference type="ChEBI" id="CHEBI:142355"/>
        <note>ligand shared between dimeric partners</note>
    </ligand>
</feature>
<feature type="binding site" description="in other chain" evidence="1">
    <location>
        <begin position="203"/>
        <end position="204"/>
    </location>
    <ligand>
        <name>a purine D-ribonucleoside</name>
        <dbReference type="ChEBI" id="CHEBI:142355"/>
        <note>ligand shared between dimeric partners</note>
    </ligand>
</feature>
<feature type="site" description="Important for catalytic activity" evidence="2">
    <location>
        <position position="217"/>
    </location>
</feature>
<protein>
    <recommendedName>
        <fullName evidence="2">Purine nucleoside phosphorylase DeoD-type</fullName>
        <shortName evidence="2">PNP</shortName>
        <ecNumber evidence="2">2.4.2.1</ecNumber>
    </recommendedName>
</protein>
<name>DEOD_BACAC</name>